<keyword id="KW-0143">Chaperone</keyword>
<keyword id="KW-0963">Cytoplasm</keyword>
<keyword id="KW-0346">Stress response</keyword>
<feature type="chain" id="PRO_1000213675" description="Protein GrpE">
    <location>
        <begin position="1"/>
        <end position="178"/>
    </location>
</feature>
<reference key="1">
    <citation type="journal article" date="2009" name="BMC Genomics">
        <title>Analysis of the Rickettsia africae genome reveals that virulence acquisition in Rickettsia species may be explained by genome reduction.</title>
        <authorList>
            <person name="Fournier P.-E."/>
            <person name="El Karkouri K."/>
            <person name="Leroy Q."/>
            <person name="Robert C."/>
            <person name="Giumelli B."/>
            <person name="Renesto P."/>
            <person name="Socolovschi C."/>
            <person name="Parola P."/>
            <person name="Audic S."/>
            <person name="Raoult D."/>
        </authorList>
    </citation>
    <scope>NUCLEOTIDE SEQUENCE [LARGE SCALE GENOMIC DNA]</scope>
    <source>
        <strain>ESF-5</strain>
    </source>
</reference>
<accession>C3PP76</accession>
<dbReference type="EMBL" id="CP001612">
    <property type="protein sequence ID" value="ACP53736.1"/>
    <property type="molecule type" value="Genomic_DNA"/>
</dbReference>
<dbReference type="RefSeq" id="WP_010977570.1">
    <property type="nucleotide sequence ID" value="NC_012633.1"/>
</dbReference>
<dbReference type="SMR" id="C3PP76"/>
<dbReference type="GeneID" id="928113"/>
<dbReference type="KEGG" id="raf:RAF_ORF0878"/>
<dbReference type="HOGENOM" id="CLU_057217_6_2_5"/>
<dbReference type="Proteomes" id="UP000002305">
    <property type="component" value="Chromosome"/>
</dbReference>
<dbReference type="GO" id="GO:0005737">
    <property type="term" value="C:cytoplasm"/>
    <property type="evidence" value="ECO:0007669"/>
    <property type="project" value="UniProtKB-SubCell"/>
</dbReference>
<dbReference type="GO" id="GO:0000774">
    <property type="term" value="F:adenyl-nucleotide exchange factor activity"/>
    <property type="evidence" value="ECO:0007669"/>
    <property type="project" value="InterPro"/>
</dbReference>
<dbReference type="GO" id="GO:0042803">
    <property type="term" value="F:protein homodimerization activity"/>
    <property type="evidence" value="ECO:0007669"/>
    <property type="project" value="InterPro"/>
</dbReference>
<dbReference type="GO" id="GO:0051087">
    <property type="term" value="F:protein-folding chaperone binding"/>
    <property type="evidence" value="ECO:0007669"/>
    <property type="project" value="InterPro"/>
</dbReference>
<dbReference type="GO" id="GO:0051082">
    <property type="term" value="F:unfolded protein binding"/>
    <property type="evidence" value="ECO:0007669"/>
    <property type="project" value="TreeGrafter"/>
</dbReference>
<dbReference type="GO" id="GO:0006457">
    <property type="term" value="P:protein folding"/>
    <property type="evidence" value="ECO:0007669"/>
    <property type="project" value="InterPro"/>
</dbReference>
<dbReference type="GO" id="GO:0030150">
    <property type="term" value="P:protein import into mitochondrial matrix"/>
    <property type="evidence" value="ECO:0007669"/>
    <property type="project" value="TreeGrafter"/>
</dbReference>
<dbReference type="CDD" id="cd00446">
    <property type="entry name" value="GrpE"/>
    <property type="match status" value="1"/>
</dbReference>
<dbReference type="FunFam" id="2.30.22.10:FF:000001">
    <property type="entry name" value="Protein GrpE"/>
    <property type="match status" value="1"/>
</dbReference>
<dbReference type="FunFam" id="3.90.20.20:FF:000016">
    <property type="entry name" value="Protein GrpE"/>
    <property type="match status" value="1"/>
</dbReference>
<dbReference type="Gene3D" id="3.90.20.20">
    <property type="match status" value="1"/>
</dbReference>
<dbReference type="Gene3D" id="2.30.22.10">
    <property type="entry name" value="Head domain of nucleotide exchange factor GrpE"/>
    <property type="match status" value="1"/>
</dbReference>
<dbReference type="HAMAP" id="MF_01151">
    <property type="entry name" value="GrpE"/>
    <property type="match status" value="1"/>
</dbReference>
<dbReference type="InterPro" id="IPR000740">
    <property type="entry name" value="GrpE"/>
</dbReference>
<dbReference type="InterPro" id="IPR013805">
    <property type="entry name" value="GrpE_coiled_coil"/>
</dbReference>
<dbReference type="InterPro" id="IPR009012">
    <property type="entry name" value="GrpE_head"/>
</dbReference>
<dbReference type="NCBIfam" id="NF010758">
    <property type="entry name" value="PRK14161.1"/>
    <property type="match status" value="1"/>
</dbReference>
<dbReference type="PANTHER" id="PTHR21237">
    <property type="entry name" value="GRPE PROTEIN"/>
    <property type="match status" value="1"/>
</dbReference>
<dbReference type="PANTHER" id="PTHR21237:SF23">
    <property type="entry name" value="GRPE PROTEIN HOMOLOG, MITOCHONDRIAL"/>
    <property type="match status" value="1"/>
</dbReference>
<dbReference type="Pfam" id="PF01025">
    <property type="entry name" value="GrpE"/>
    <property type="match status" value="1"/>
</dbReference>
<dbReference type="PRINTS" id="PR00773">
    <property type="entry name" value="GRPEPROTEIN"/>
</dbReference>
<dbReference type="SUPFAM" id="SSF58014">
    <property type="entry name" value="Coiled-coil domain of nucleotide exchange factor GrpE"/>
    <property type="match status" value="1"/>
</dbReference>
<dbReference type="SUPFAM" id="SSF51064">
    <property type="entry name" value="Head domain of nucleotide exchange factor GrpE"/>
    <property type="match status" value="1"/>
</dbReference>
<dbReference type="PROSITE" id="PS01071">
    <property type="entry name" value="GRPE"/>
    <property type="match status" value="1"/>
</dbReference>
<gene>
    <name evidence="1" type="primary">grpE</name>
    <name type="ordered locus">RAF_ORF0878</name>
</gene>
<sequence length="178" mass="20172">MIDDNIENNEQTINDIAEEIVETANPEVTALKAEIEELKDKLIRTTAEIDNTRKRLEKARDEAKDYAIATFAKELLNVSDNLSRALAHKPANSDVEVTNIIAGVQMTKDELDKVFHKHHIEEIKPEIGSMFDYNLHNAIAQIEHPDHAPNSIITLMQSGYKIRDRLLRPATVQVVKKP</sequence>
<name>GRPE_RICAE</name>
<evidence type="ECO:0000255" key="1">
    <source>
        <dbReference type="HAMAP-Rule" id="MF_01151"/>
    </source>
</evidence>
<comment type="function">
    <text evidence="1">Participates actively in the response to hyperosmotic and heat shock by preventing the aggregation of stress-denatured proteins, in association with DnaK and GrpE. It is the nucleotide exchange factor for DnaK and may function as a thermosensor. Unfolded proteins bind initially to DnaJ; upon interaction with the DnaJ-bound protein, DnaK hydrolyzes its bound ATP, resulting in the formation of a stable complex. GrpE releases ADP from DnaK; ATP binding to DnaK triggers the release of the substrate protein, thus completing the reaction cycle. Several rounds of ATP-dependent interactions between DnaJ, DnaK and GrpE are required for fully efficient folding.</text>
</comment>
<comment type="subunit">
    <text evidence="1">Homodimer.</text>
</comment>
<comment type="subcellular location">
    <subcellularLocation>
        <location evidence="1">Cytoplasm</location>
    </subcellularLocation>
</comment>
<comment type="similarity">
    <text evidence="1">Belongs to the GrpE family.</text>
</comment>
<proteinExistence type="inferred from homology"/>
<protein>
    <recommendedName>
        <fullName evidence="1">Protein GrpE</fullName>
    </recommendedName>
    <alternativeName>
        <fullName evidence="1">HSP-70 cofactor</fullName>
    </alternativeName>
</protein>
<organism>
    <name type="scientific">Rickettsia africae (strain ESF-5)</name>
    <dbReference type="NCBI Taxonomy" id="347255"/>
    <lineage>
        <taxon>Bacteria</taxon>
        <taxon>Pseudomonadati</taxon>
        <taxon>Pseudomonadota</taxon>
        <taxon>Alphaproteobacteria</taxon>
        <taxon>Rickettsiales</taxon>
        <taxon>Rickettsiaceae</taxon>
        <taxon>Rickettsieae</taxon>
        <taxon>Rickettsia</taxon>
        <taxon>spotted fever group</taxon>
    </lineage>
</organism>